<feature type="chain" id="PRO_0000411652" description="UPF0398 protein SPs0474">
    <location>
        <begin position="1"/>
        <end position="171"/>
    </location>
</feature>
<evidence type="ECO:0000255" key="1">
    <source>
        <dbReference type="HAMAP-Rule" id="MF_01575"/>
    </source>
</evidence>
<gene>
    <name type="ordered locus">SPs0474</name>
</gene>
<protein>
    <recommendedName>
        <fullName evidence="1">UPF0398 protein SPs0474</fullName>
    </recommendedName>
</protein>
<organism>
    <name type="scientific">Streptococcus pyogenes serotype M3 (strain SSI-1)</name>
    <dbReference type="NCBI Taxonomy" id="193567"/>
    <lineage>
        <taxon>Bacteria</taxon>
        <taxon>Bacillati</taxon>
        <taxon>Bacillota</taxon>
        <taxon>Bacilli</taxon>
        <taxon>Lactobacillales</taxon>
        <taxon>Streptococcaceae</taxon>
        <taxon>Streptococcus</taxon>
    </lineage>
</organism>
<accession>P0DH25</accession>
<accession>Q79Y54</accession>
<accession>Q8K6D7</accession>
<sequence>MTAILITGYRSFEIGIFDHKDPRVSIIKQAIRKDLIGYLENGVDWFIFTGNLGFEQWALEVANELKEEYPLQIATIFLFETHGDKWNEKNQEVLSQFRAVDFVKYYFPNYEQPTQFSQYYQFLLEKTEGAYVFYDTENETNLKYFLKKAKDMPYYQLLLLTFDRLNDMSQS</sequence>
<comment type="similarity">
    <text evidence="1">Belongs to the UPF0398 family.</text>
</comment>
<proteinExistence type="inferred from homology"/>
<dbReference type="EMBL" id="BA000034">
    <property type="protein sequence ID" value="BAC63569.1"/>
    <property type="molecule type" value="Genomic_DNA"/>
</dbReference>
<dbReference type="RefSeq" id="WP_002994217.1">
    <property type="nucleotide sequence ID" value="NC_004606.1"/>
</dbReference>
<dbReference type="SMR" id="P0DH25"/>
<dbReference type="KEGG" id="sps:SPs0474"/>
<dbReference type="HOGENOM" id="CLU_105319_0_0_9"/>
<dbReference type="Gene3D" id="3.40.50.450">
    <property type="match status" value="1"/>
</dbReference>
<dbReference type="HAMAP" id="MF_01575">
    <property type="entry name" value="UPF0398"/>
    <property type="match status" value="1"/>
</dbReference>
<dbReference type="InterPro" id="IPR010697">
    <property type="entry name" value="YspA"/>
</dbReference>
<dbReference type="NCBIfam" id="NF010181">
    <property type="entry name" value="PRK13660.1"/>
    <property type="match status" value="1"/>
</dbReference>
<dbReference type="PANTHER" id="PTHR38440:SF1">
    <property type="entry name" value="UPF0398 PROTEIN SPR0331"/>
    <property type="match status" value="1"/>
</dbReference>
<dbReference type="PANTHER" id="PTHR38440">
    <property type="entry name" value="UPF0398 PROTEIN YPSA"/>
    <property type="match status" value="1"/>
</dbReference>
<dbReference type="Pfam" id="PF06908">
    <property type="entry name" value="YpsA"/>
    <property type="match status" value="1"/>
</dbReference>
<dbReference type="PIRSF" id="PIRSF021290">
    <property type="entry name" value="DUF1273"/>
    <property type="match status" value="1"/>
</dbReference>
<dbReference type="SUPFAM" id="SSF102405">
    <property type="entry name" value="MCP/YpsA-like"/>
    <property type="match status" value="1"/>
</dbReference>
<reference key="1">
    <citation type="journal article" date="2003" name="Genome Res.">
        <title>Genome sequence of an M3 strain of Streptococcus pyogenes reveals a large-scale genomic rearrangement in invasive strains and new insights into phage evolution.</title>
        <authorList>
            <person name="Nakagawa I."/>
            <person name="Kurokawa K."/>
            <person name="Yamashita A."/>
            <person name="Nakata M."/>
            <person name="Tomiyasu Y."/>
            <person name="Okahashi N."/>
            <person name="Kawabata S."/>
            <person name="Yamazaki K."/>
            <person name="Shiba T."/>
            <person name="Yasunaga T."/>
            <person name="Hayashi H."/>
            <person name="Hattori M."/>
            <person name="Hamada S."/>
        </authorList>
    </citation>
    <scope>NUCLEOTIDE SEQUENCE [LARGE SCALE GENOMIC DNA]</scope>
    <source>
        <strain>SSI-1</strain>
    </source>
</reference>
<name>Y1388_STRPQ</name>